<name>LPQB_COREF</name>
<evidence type="ECO:0000255" key="1">
    <source>
        <dbReference type="HAMAP-Rule" id="MF_01373"/>
    </source>
</evidence>
<accession>Q8FRJ0</accession>
<gene>
    <name evidence="1" type="primary">lpqB</name>
    <name type="ordered locus">CE0771</name>
</gene>
<sequence>MRRMKALTAAMTAALLVSGCSTLPSNTDPQVLRSFNADDQSAEVAGPTPGADPDILLRGFFSAAAFPAQQYQASRAYLTEEANRNWDPTATTVVVDRIDLNTQAGATEDERRIVIRGTQVGTLGSGGVYRPENSELVAEIVMRRVDNEWRIDDLPDGVVLERTEMRNHYTPKNVYFFDPSGQVLVGDRRWIHNAVQSLDTTLMSLLVSGPSQYLAPGVVHQLPSGASFVGFSDGAYQFTGLSSMNEEERLSFATQVVWMLAHAEIPGPYAIFADGSPLVADFPVLSIEDVAEFNPEAYTNAVSTLFSLRDGVVSRVSSGTVTPLTGFLGSGDIDSVAISTSANVAAAVRGNESPRLSVGAPEGSYTDVLTADTITRPTFEYAANALWAVADGDTPVRVTRSSTTRELVQTEVEITLPEGVTGAISEFQLSRTGVRAAMIIEGRVYMGVVTRPSPGERGVTNIVEVAPALRETALSLAWRQDGSLLVGTSMPELPIWRVEIDGSGASALPSGNINAPVVSVASSASTIYATDAHALLQLPASDNTIWREVPGLLGVRSAAVVAY</sequence>
<feature type="signal peptide" evidence="1">
    <location>
        <begin position="1"/>
        <end position="19"/>
    </location>
</feature>
<feature type="chain" id="PRO_0000286715" description="Lipoprotein LpqB">
    <location>
        <begin position="20"/>
        <end position="563"/>
    </location>
</feature>
<feature type="lipid moiety-binding region" description="N-palmitoyl cysteine" evidence="1">
    <location>
        <position position="20"/>
    </location>
</feature>
<feature type="lipid moiety-binding region" description="S-diacylglycerol cysteine" evidence="1">
    <location>
        <position position="20"/>
    </location>
</feature>
<keyword id="KW-1003">Cell membrane</keyword>
<keyword id="KW-0449">Lipoprotein</keyword>
<keyword id="KW-0472">Membrane</keyword>
<keyword id="KW-0564">Palmitate</keyword>
<keyword id="KW-1185">Reference proteome</keyword>
<keyword id="KW-0732">Signal</keyword>
<reference key="1">
    <citation type="journal article" date="2003" name="Genome Res.">
        <title>Comparative complete genome sequence analysis of the amino acid replacements responsible for the thermostability of Corynebacterium efficiens.</title>
        <authorList>
            <person name="Nishio Y."/>
            <person name="Nakamura Y."/>
            <person name="Kawarabayasi Y."/>
            <person name="Usuda Y."/>
            <person name="Kimura E."/>
            <person name="Sugimoto S."/>
            <person name="Matsui K."/>
            <person name="Yamagishi A."/>
            <person name="Kikuchi H."/>
            <person name="Ikeo K."/>
            <person name="Gojobori T."/>
        </authorList>
    </citation>
    <scope>NUCLEOTIDE SEQUENCE [LARGE SCALE GENOMIC DNA]</scope>
    <source>
        <strain>DSM 44549 / YS-314 / AJ 12310 / JCM 11189 / NBRC 100395</strain>
    </source>
</reference>
<protein>
    <recommendedName>
        <fullName evidence="1">Lipoprotein LpqB</fullName>
    </recommendedName>
</protein>
<organism>
    <name type="scientific">Corynebacterium efficiens (strain DSM 44549 / YS-314 / AJ 12310 / JCM 11189 / NBRC 100395)</name>
    <dbReference type="NCBI Taxonomy" id="196164"/>
    <lineage>
        <taxon>Bacteria</taxon>
        <taxon>Bacillati</taxon>
        <taxon>Actinomycetota</taxon>
        <taxon>Actinomycetes</taxon>
        <taxon>Mycobacteriales</taxon>
        <taxon>Corynebacteriaceae</taxon>
        <taxon>Corynebacterium</taxon>
    </lineage>
</organism>
<proteinExistence type="inferred from homology"/>
<dbReference type="EMBL" id="BA000035">
    <property type="protein sequence ID" value="BAC17581.1"/>
    <property type="molecule type" value="Genomic_DNA"/>
</dbReference>
<dbReference type="SMR" id="Q8FRJ0"/>
<dbReference type="STRING" id="196164.gene:10741173"/>
<dbReference type="KEGG" id="cef:CE0771"/>
<dbReference type="eggNOG" id="COG5401">
    <property type="taxonomic scope" value="Bacteria"/>
</dbReference>
<dbReference type="HOGENOM" id="CLU_032207_1_0_11"/>
<dbReference type="OrthoDB" id="3226781at2"/>
<dbReference type="Proteomes" id="UP000001409">
    <property type="component" value="Chromosome"/>
</dbReference>
<dbReference type="GO" id="GO:0005886">
    <property type="term" value="C:plasma membrane"/>
    <property type="evidence" value="ECO:0007669"/>
    <property type="project" value="UniProtKB-SubCell"/>
</dbReference>
<dbReference type="HAMAP" id="MF_01373">
    <property type="entry name" value="LpqB_lipoprot"/>
    <property type="match status" value="1"/>
</dbReference>
<dbReference type="InterPro" id="IPR019606">
    <property type="entry name" value="GerMN"/>
</dbReference>
<dbReference type="InterPro" id="IPR023959">
    <property type="entry name" value="Lipoprotein_LpqB"/>
</dbReference>
<dbReference type="InterPro" id="IPR018910">
    <property type="entry name" value="Lipoprotein_LpqB_C"/>
</dbReference>
<dbReference type="NCBIfam" id="NF010141">
    <property type="entry name" value="PRK13616.1"/>
    <property type="match status" value="1"/>
</dbReference>
<dbReference type="Pfam" id="PF10647">
    <property type="entry name" value="Gmad1"/>
    <property type="match status" value="1"/>
</dbReference>
<dbReference type="SMART" id="SM00909">
    <property type="entry name" value="Germane"/>
    <property type="match status" value="1"/>
</dbReference>
<dbReference type="PROSITE" id="PS51257">
    <property type="entry name" value="PROKAR_LIPOPROTEIN"/>
    <property type="match status" value="1"/>
</dbReference>
<comment type="subcellular location">
    <subcellularLocation>
        <location evidence="1">Cell membrane</location>
        <topology evidence="1">Lipid-anchor</topology>
    </subcellularLocation>
</comment>
<comment type="similarity">
    <text evidence="1">Belongs to the LpqB lipoprotein family.</text>
</comment>